<organism>
    <name type="scientific">Methanocaldococcus jannaschii (strain ATCC 43067 / DSM 2661 / JAL-1 / JCM 10045 / NBRC 100440)</name>
    <name type="common">Methanococcus jannaschii</name>
    <dbReference type="NCBI Taxonomy" id="243232"/>
    <lineage>
        <taxon>Archaea</taxon>
        <taxon>Methanobacteriati</taxon>
        <taxon>Methanobacteriota</taxon>
        <taxon>Methanomada group</taxon>
        <taxon>Methanococci</taxon>
        <taxon>Methanococcales</taxon>
        <taxon>Methanocaldococcaceae</taxon>
        <taxon>Methanocaldococcus</taxon>
    </lineage>
</organism>
<reference key="1">
    <citation type="journal article" date="1996" name="Science">
        <title>Complete genome sequence of the methanogenic archaeon, Methanococcus jannaschii.</title>
        <authorList>
            <person name="Bult C.J."/>
            <person name="White O."/>
            <person name="Olsen G.J."/>
            <person name="Zhou L."/>
            <person name="Fleischmann R.D."/>
            <person name="Sutton G.G."/>
            <person name="Blake J.A."/>
            <person name="FitzGerald L.M."/>
            <person name="Clayton R.A."/>
            <person name="Gocayne J.D."/>
            <person name="Kerlavage A.R."/>
            <person name="Dougherty B.A."/>
            <person name="Tomb J.-F."/>
            <person name="Adams M.D."/>
            <person name="Reich C.I."/>
            <person name="Overbeek R."/>
            <person name="Kirkness E.F."/>
            <person name="Weinstock K.G."/>
            <person name="Merrick J.M."/>
            <person name="Glodek A."/>
            <person name="Scott J.L."/>
            <person name="Geoghagen N.S.M."/>
            <person name="Weidman J.F."/>
            <person name="Fuhrmann J.L."/>
            <person name="Nguyen D."/>
            <person name="Utterback T.R."/>
            <person name="Kelley J.M."/>
            <person name="Peterson J.D."/>
            <person name="Sadow P.W."/>
            <person name="Hanna M.C."/>
            <person name="Cotton M.D."/>
            <person name="Roberts K.M."/>
            <person name="Hurst M.A."/>
            <person name="Kaine B.P."/>
            <person name="Borodovsky M."/>
            <person name="Klenk H.-P."/>
            <person name="Fraser C.M."/>
            <person name="Smith H.O."/>
            <person name="Woese C.R."/>
            <person name="Venter J.C."/>
        </authorList>
    </citation>
    <scope>NUCLEOTIDE SEQUENCE [LARGE SCALE GENOMIC DNA]</scope>
    <source>
        <strain>ATCC 43067 / DSM 2661 / JAL-1 / JCM 10045 / NBRC 100440</strain>
    </source>
</reference>
<feature type="chain" id="PRO_0000135071" description="Uncharacterized protein MJ0746">
    <location>
        <begin position="1"/>
        <end position="141"/>
    </location>
</feature>
<feature type="domain" description="Ferritin-like diiron" evidence="1">
    <location>
        <begin position="13"/>
        <end position="141"/>
    </location>
</feature>
<feature type="binding site" evidence="1">
    <location>
        <position position="63"/>
    </location>
    <ligand>
        <name>Fe cation</name>
        <dbReference type="ChEBI" id="CHEBI:24875"/>
    </ligand>
</feature>
<feature type="binding site" evidence="1">
    <location>
        <position position="66"/>
    </location>
    <ligand>
        <name>Fe cation</name>
        <dbReference type="ChEBI" id="CHEBI:24875"/>
    </ligand>
</feature>
<feature type="binding site" evidence="1">
    <location>
        <position position="125"/>
    </location>
    <ligand>
        <name>Fe cation</name>
        <dbReference type="ChEBI" id="CHEBI:24875"/>
    </ligand>
</feature>
<feature type="binding site" evidence="1">
    <location>
        <position position="128"/>
    </location>
    <ligand>
        <name>Fe cation</name>
        <dbReference type="ChEBI" id="CHEBI:24875"/>
    </ligand>
</feature>
<accession>Q58156</accession>
<keyword id="KW-0408">Iron</keyword>
<keyword id="KW-0479">Metal-binding</keyword>
<keyword id="KW-1185">Reference proteome</keyword>
<name>Y746_METJA</name>
<sequence length="141" mass="15905">MELDLINEHKIGVTKGTELEKEVQANFEGECKEVGLYLAMARQAQREGLPEVAEVLIRIAMEEAQHAAHFAEMNGLISENLKENIEMMLKGECMANKEKKAAATKAKELGIDPAHDFFDESSRDEARHAKMLKGILDRYFK</sequence>
<protein>
    <recommendedName>
        <fullName>Uncharacterized protein MJ0746</fullName>
    </recommendedName>
</protein>
<gene>
    <name type="ordered locus">MJ0746</name>
</gene>
<dbReference type="EMBL" id="L77117">
    <property type="protein sequence ID" value="AAB98739.1"/>
    <property type="molecule type" value="Genomic_DNA"/>
</dbReference>
<dbReference type="PIR" id="B64393">
    <property type="entry name" value="B64393"/>
</dbReference>
<dbReference type="RefSeq" id="WP_010870251.1">
    <property type="nucleotide sequence ID" value="NC_000909.1"/>
</dbReference>
<dbReference type="SMR" id="Q58156"/>
<dbReference type="FunCoup" id="Q58156">
    <property type="interactions" value="1"/>
</dbReference>
<dbReference type="STRING" id="243232.MJ_0746"/>
<dbReference type="PaxDb" id="243232-MJ_0746"/>
<dbReference type="EnsemblBacteria" id="AAB98739">
    <property type="protein sequence ID" value="AAB98739"/>
    <property type="gene ID" value="MJ_0746"/>
</dbReference>
<dbReference type="GeneID" id="1451623"/>
<dbReference type="KEGG" id="mja:MJ_0746"/>
<dbReference type="eggNOG" id="arCOG01097">
    <property type="taxonomic scope" value="Archaea"/>
</dbReference>
<dbReference type="HOGENOM" id="CLU_113705_0_0_2"/>
<dbReference type="InParanoid" id="Q58156"/>
<dbReference type="OrthoDB" id="147647at2157"/>
<dbReference type="PhylomeDB" id="Q58156"/>
<dbReference type="Proteomes" id="UP000000805">
    <property type="component" value="Chromosome"/>
</dbReference>
<dbReference type="GO" id="GO:0005506">
    <property type="term" value="F:iron ion binding"/>
    <property type="evidence" value="ECO:0007669"/>
    <property type="project" value="InterPro"/>
</dbReference>
<dbReference type="GO" id="GO:0016491">
    <property type="term" value="F:oxidoreductase activity"/>
    <property type="evidence" value="ECO:0007669"/>
    <property type="project" value="InterPro"/>
</dbReference>
<dbReference type="CDD" id="cd01046">
    <property type="entry name" value="Rubrerythrin_like"/>
    <property type="match status" value="1"/>
</dbReference>
<dbReference type="Gene3D" id="1.20.1260.10">
    <property type="match status" value="2"/>
</dbReference>
<dbReference type="InterPro" id="IPR052773">
    <property type="entry name" value="Anaerobic_Peroxidase-Rel"/>
</dbReference>
<dbReference type="InterPro" id="IPR012347">
    <property type="entry name" value="Ferritin-like"/>
</dbReference>
<dbReference type="InterPro" id="IPR009040">
    <property type="entry name" value="Ferritin-like_diiron"/>
</dbReference>
<dbReference type="InterPro" id="IPR009078">
    <property type="entry name" value="Ferritin-like_SF"/>
</dbReference>
<dbReference type="InterPro" id="IPR045236">
    <property type="entry name" value="RevRr_diiron-bd_dom"/>
</dbReference>
<dbReference type="InterPro" id="IPR003251">
    <property type="entry name" value="Rr_diiron-bd_dom"/>
</dbReference>
<dbReference type="PANTHER" id="PTHR43339:SF1">
    <property type="entry name" value="RUBRERYTHRIN"/>
    <property type="match status" value="1"/>
</dbReference>
<dbReference type="PANTHER" id="PTHR43339">
    <property type="entry name" value="RUBRERYTHRIN-RELATED"/>
    <property type="match status" value="1"/>
</dbReference>
<dbReference type="Pfam" id="PF02915">
    <property type="entry name" value="Rubrerythrin"/>
    <property type="match status" value="1"/>
</dbReference>
<dbReference type="SUPFAM" id="SSF47240">
    <property type="entry name" value="Ferritin-like"/>
    <property type="match status" value="1"/>
</dbReference>
<dbReference type="PROSITE" id="PS50905">
    <property type="entry name" value="FERRITIN_LIKE"/>
    <property type="match status" value="1"/>
</dbReference>
<proteinExistence type="predicted"/>
<evidence type="ECO:0000255" key="1">
    <source>
        <dbReference type="PROSITE-ProRule" id="PRU00085"/>
    </source>
</evidence>